<proteinExistence type="inferred from homology"/>
<accession>Q0AJD2</accession>
<name>MRAZ_NITEC</name>
<sequence length="148" mass="16359">MFRGSTQLNLDSKGRLAIPAKYRNELFANCGGNIVVTADPSRCLLIYPQPVWEPIEKKLSGFSSFNPQIRSLQRLIIGNACDVEMDGSGRILISAPLRQFAGLQKEVVLAGQGEKFELWDMAKWDLEIDTATACKDGDIPPELEGFSL</sequence>
<dbReference type="EMBL" id="CP000450">
    <property type="protein sequence ID" value="ABI58539.1"/>
    <property type="molecule type" value="Genomic_DNA"/>
</dbReference>
<dbReference type="RefSeq" id="WP_011633383.1">
    <property type="nucleotide sequence ID" value="NC_008344.1"/>
</dbReference>
<dbReference type="SMR" id="Q0AJD2"/>
<dbReference type="STRING" id="335283.Neut_0255"/>
<dbReference type="KEGG" id="net:Neut_0255"/>
<dbReference type="eggNOG" id="COG2001">
    <property type="taxonomic scope" value="Bacteria"/>
</dbReference>
<dbReference type="HOGENOM" id="CLU_107907_2_0_4"/>
<dbReference type="OrthoDB" id="9807753at2"/>
<dbReference type="Proteomes" id="UP000001966">
    <property type="component" value="Chromosome"/>
</dbReference>
<dbReference type="GO" id="GO:0005737">
    <property type="term" value="C:cytoplasm"/>
    <property type="evidence" value="ECO:0007669"/>
    <property type="project" value="UniProtKB-UniRule"/>
</dbReference>
<dbReference type="GO" id="GO:0009295">
    <property type="term" value="C:nucleoid"/>
    <property type="evidence" value="ECO:0007669"/>
    <property type="project" value="UniProtKB-SubCell"/>
</dbReference>
<dbReference type="GO" id="GO:0003700">
    <property type="term" value="F:DNA-binding transcription factor activity"/>
    <property type="evidence" value="ECO:0007669"/>
    <property type="project" value="UniProtKB-UniRule"/>
</dbReference>
<dbReference type="GO" id="GO:0000976">
    <property type="term" value="F:transcription cis-regulatory region binding"/>
    <property type="evidence" value="ECO:0007669"/>
    <property type="project" value="TreeGrafter"/>
</dbReference>
<dbReference type="GO" id="GO:2000143">
    <property type="term" value="P:negative regulation of DNA-templated transcription initiation"/>
    <property type="evidence" value="ECO:0007669"/>
    <property type="project" value="TreeGrafter"/>
</dbReference>
<dbReference type="CDD" id="cd16321">
    <property type="entry name" value="MraZ_C"/>
    <property type="match status" value="1"/>
</dbReference>
<dbReference type="CDD" id="cd16320">
    <property type="entry name" value="MraZ_N"/>
    <property type="match status" value="1"/>
</dbReference>
<dbReference type="Gene3D" id="3.40.1550.20">
    <property type="entry name" value="Transcriptional regulator MraZ domain"/>
    <property type="match status" value="1"/>
</dbReference>
<dbReference type="HAMAP" id="MF_01008">
    <property type="entry name" value="MraZ"/>
    <property type="match status" value="1"/>
</dbReference>
<dbReference type="InterPro" id="IPR003444">
    <property type="entry name" value="MraZ"/>
</dbReference>
<dbReference type="InterPro" id="IPR035644">
    <property type="entry name" value="MraZ_C"/>
</dbReference>
<dbReference type="InterPro" id="IPR020603">
    <property type="entry name" value="MraZ_dom"/>
</dbReference>
<dbReference type="InterPro" id="IPR035642">
    <property type="entry name" value="MraZ_N"/>
</dbReference>
<dbReference type="InterPro" id="IPR038619">
    <property type="entry name" value="MraZ_sf"/>
</dbReference>
<dbReference type="InterPro" id="IPR007159">
    <property type="entry name" value="SpoVT-AbrB_dom"/>
</dbReference>
<dbReference type="InterPro" id="IPR037914">
    <property type="entry name" value="SpoVT-AbrB_sf"/>
</dbReference>
<dbReference type="NCBIfam" id="TIGR00242">
    <property type="entry name" value="division/cell wall cluster transcriptional repressor MraZ"/>
    <property type="match status" value="1"/>
</dbReference>
<dbReference type="PANTHER" id="PTHR34701">
    <property type="entry name" value="TRANSCRIPTIONAL REGULATOR MRAZ"/>
    <property type="match status" value="1"/>
</dbReference>
<dbReference type="PANTHER" id="PTHR34701:SF1">
    <property type="entry name" value="TRANSCRIPTIONAL REGULATOR MRAZ"/>
    <property type="match status" value="1"/>
</dbReference>
<dbReference type="Pfam" id="PF02381">
    <property type="entry name" value="MraZ"/>
    <property type="match status" value="2"/>
</dbReference>
<dbReference type="SUPFAM" id="SSF89447">
    <property type="entry name" value="AbrB/MazE/MraZ-like"/>
    <property type="match status" value="1"/>
</dbReference>
<dbReference type="PROSITE" id="PS51740">
    <property type="entry name" value="SPOVT_ABRB"/>
    <property type="match status" value="2"/>
</dbReference>
<comment type="subunit">
    <text evidence="1">Forms oligomers.</text>
</comment>
<comment type="subcellular location">
    <subcellularLocation>
        <location evidence="1">Cytoplasm</location>
        <location evidence="1">Nucleoid</location>
    </subcellularLocation>
</comment>
<comment type="similarity">
    <text evidence="1">Belongs to the MraZ family.</text>
</comment>
<protein>
    <recommendedName>
        <fullName>Transcriptional regulator MraZ</fullName>
    </recommendedName>
</protein>
<organism>
    <name type="scientific">Nitrosomonas eutropha (strain DSM 101675 / C91 / Nm57)</name>
    <dbReference type="NCBI Taxonomy" id="335283"/>
    <lineage>
        <taxon>Bacteria</taxon>
        <taxon>Pseudomonadati</taxon>
        <taxon>Pseudomonadota</taxon>
        <taxon>Betaproteobacteria</taxon>
        <taxon>Nitrosomonadales</taxon>
        <taxon>Nitrosomonadaceae</taxon>
        <taxon>Nitrosomonas</taxon>
    </lineage>
</organism>
<reference key="1">
    <citation type="journal article" date="2007" name="Environ. Microbiol.">
        <title>Whole-genome analysis of the ammonia-oxidizing bacterium, Nitrosomonas eutropha C91: implications for niche adaptation.</title>
        <authorList>
            <person name="Stein L.Y."/>
            <person name="Arp D.J."/>
            <person name="Berube P.M."/>
            <person name="Chain P.S."/>
            <person name="Hauser L."/>
            <person name="Jetten M.S."/>
            <person name="Klotz M.G."/>
            <person name="Larimer F.W."/>
            <person name="Norton J.M."/>
            <person name="Op den Camp H.J.M."/>
            <person name="Shin M."/>
            <person name="Wei X."/>
        </authorList>
    </citation>
    <scope>NUCLEOTIDE SEQUENCE [LARGE SCALE GENOMIC DNA]</scope>
    <source>
        <strain>DSM 101675 / C91 / Nm57</strain>
    </source>
</reference>
<feature type="chain" id="PRO_1000062907" description="Transcriptional regulator MraZ">
    <location>
        <begin position="1"/>
        <end position="148"/>
    </location>
</feature>
<feature type="domain" description="SpoVT-AbrB 1" evidence="2">
    <location>
        <begin position="5"/>
        <end position="51"/>
    </location>
</feature>
<feature type="domain" description="SpoVT-AbrB 2" evidence="2">
    <location>
        <begin position="80"/>
        <end position="123"/>
    </location>
</feature>
<keyword id="KW-0963">Cytoplasm</keyword>
<keyword id="KW-0238">DNA-binding</keyword>
<keyword id="KW-0677">Repeat</keyword>
<keyword id="KW-0804">Transcription</keyword>
<keyword id="KW-0805">Transcription regulation</keyword>
<evidence type="ECO:0000255" key="1">
    <source>
        <dbReference type="HAMAP-Rule" id="MF_01008"/>
    </source>
</evidence>
<evidence type="ECO:0000255" key="2">
    <source>
        <dbReference type="PROSITE-ProRule" id="PRU01076"/>
    </source>
</evidence>
<gene>
    <name evidence="1" type="primary">mraZ</name>
    <name type="ordered locus">Neut_0255</name>
</gene>